<comment type="function">
    <text>Has a tumor-suppressor role for NES1 in breast and prostate cancer.</text>
</comment>
<comment type="subcellular location">
    <subcellularLocation>
        <location evidence="7">Secreted</location>
    </subcellularLocation>
</comment>
<comment type="tissue specificity">
    <text>Expressed in breast, ovary and prostate.</text>
</comment>
<comment type="developmental stage">
    <text>Down-regulated during breast cancer progression.</text>
</comment>
<comment type="similarity">
    <text evidence="3">Belongs to the peptidase S1 family. Kallikrein subfamily.</text>
</comment>
<comment type="online information" name="Atlas of Genetics and Cytogenetics in Oncology and Haematology">
    <link uri="https://atlasgeneticsoncology.org/gene/41076/KLK10"/>
</comment>
<accession>O43240</accession>
<accession>A6NC12</accession>
<accession>Q53YL3</accession>
<accession>Q99920</accession>
<accession>Q9GZW9</accession>
<evidence type="ECO:0000250" key="1"/>
<evidence type="ECO:0000255" key="2"/>
<evidence type="ECO:0000255" key="3">
    <source>
        <dbReference type="PROSITE-ProRule" id="PRU00274"/>
    </source>
</evidence>
<evidence type="ECO:0000269" key="4">
    <source>
    </source>
</evidence>
<evidence type="ECO:0000269" key="5">
    <source>
    </source>
</evidence>
<evidence type="ECO:0000269" key="6">
    <source>
    </source>
</evidence>
<evidence type="ECO:0000305" key="7"/>
<evidence type="ECO:0007829" key="8">
    <source>
        <dbReference type="PDB" id="5LPE"/>
    </source>
</evidence>
<evidence type="ECO:0007829" key="9">
    <source>
        <dbReference type="PDB" id="5LPF"/>
    </source>
</evidence>
<keyword id="KW-0002">3D-structure</keyword>
<keyword id="KW-0131">Cell cycle</keyword>
<keyword id="KW-1015">Disulfide bond</keyword>
<keyword id="KW-0325">Glycoprotein</keyword>
<keyword id="KW-0378">Hydrolase</keyword>
<keyword id="KW-0645">Protease</keyword>
<keyword id="KW-1267">Proteomics identification</keyword>
<keyword id="KW-1185">Reference proteome</keyword>
<keyword id="KW-0964">Secreted</keyword>
<keyword id="KW-0720">Serine protease</keyword>
<keyword id="KW-0732">Signal</keyword>
<keyword id="KW-0043">Tumor suppressor</keyword>
<reference key="1">
    <citation type="journal article" date="1996" name="Cancer Res.">
        <title>Identification of a novel serine protease-like gene, the expression of which is down-regulated during breast cancer progression.</title>
        <authorList>
            <person name="Liu X.-L."/>
            <person name="Wazer D.E."/>
            <person name="Watanabe K."/>
            <person name="Band V."/>
        </authorList>
    </citation>
    <scope>NUCLEOTIDE SEQUENCE [MRNA]</scope>
    <scope>VARIANTS ALA-50 AND PRO-149</scope>
    <source>
        <tissue>Epithelium</tissue>
    </source>
</reference>
<reference key="2">
    <citation type="journal article" date="1998" name="Biochem. Biophys. Res. Commun.">
        <title>Structural characterization and mapping of the normal epithelial cell-specific 1 gene.</title>
        <authorList>
            <person name="Luo L.-Y."/>
            <person name="Herbrick J.A."/>
            <person name="Scherer S.W."/>
            <person name="Beatty B."/>
            <person name="Squire J."/>
            <person name="Diamandis E.P."/>
        </authorList>
    </citation>
    <scope>NUCLEOTIDE SEQUENCE [GENOMIC DNA]</scope>
    <scope>VARIANTS ALA-50 AND PRO-149</scope>
</reference>
<reference key="3">
    <citation type="journal article" date="2000" name="Gene">
        <title>Sequencing and expression analysis of the serine protease gene cluster located in chromosome 19q13 region.</title>
        <authorList>
            <person name="Gan L."/>
            <person name="Lee I."/>
            <person name="Smith R."/>
            <person name="Argonza-Barrett R."/>
            <person name="Lei H."/>
            <person name="McCuaig J."/>
            <person name="Moss P."/>
            <person name="Paeper B."/>
            <person name="Wang K."/>
        </authorList>
    </citation>
    <scope>NUCLEOTIDE SEQUENCE [GENOMIC DNA]</scope>
</reference>
<reference key="4">
    <citation type="journal article" date="2005" name="Tumor Biol.">
        <title>Identification of new splice variants and differential expression of the human kallikrein 10 gene, a candidate cancer biomarker.</title>
        <authorList>
            <person name="Yousef G.M."/>
            <person name="White N.M.A."/>
            <person name="Michael I.P."/>
            <person name="Cho J.C.-K."/>
            <person name="Robb J.D."/>
            <person name="Kurlender L."/>
            <person name="Khan S."/>
            <person name="Diamandis E.P."/>
        </authorList>
    </citation>
    <scope>NUCLEOTIDE SEQUENCE [MRNA]</scope>
</reference>
<reference key="5">
    <citation type="journal article" date="2004" name="Nature">
        <title>The DNA sequence and biology of human chromosome 19.</title>
        <authorList>
            <person name="Grimwood J."/>
            <person name="Gordon L.A."/>
            <person name="Olsen A.S."/>
            <person name="Terry A."/>
            <person name="Schmutz J."/>
            <person name="Lamerdin J.E."/>
            <person name="Hellsten U."/>
            <person name="Goodstein D."/>
            <person name="Couronne O."/>
            <person name="Tran-Gyamfi M."/>
            <person name="Aerts A."/>
            <person name="Altherr M."/>
            <person name="Ashworth L."/>
            <person name="Bajorek E."/>
            <person name="Black S."/>
            <person name="Branscomb E."/>
            <person name="Caenepeel S."/>
            <person name="Carrano A.V."/>
            <person name="Caoile C."/>
            <person name="Chan Y.M."/>
            <person name="Christensen M."/>
            <person name="Cleland C.A."/>
            <person name="Copeland A."/>
            <person name="Dalin E."/>
            <person name="Dehal P."/>
            <person name="Denys M."/>
            <person name="Detter J.C."/>
            <person name="Escobar J."/>
            <person name="Flowers D."/>
            <person name="Fotopulos D."/>
            <person name="Garcia C."/>
            <person name="Georgescu A.M."/>
            <person name="Glavina T."/>
            <person name="Gomez M."/>
            <person name="Gonzales E."/>
            <person name="Groza M."/>
            <person name="Hammon N."/>
            <person name="Hawkins T."/>
            <person name="Haydu L."/>
            <person name="Ho I."/>
            <person name="Huang W."/>
            <person name="Israni S."/>
            <person name="Jett J."/>
            <person name="Kadner K."/>
            <person name="Kimball H."/>
            <person name="Kobayashi A."/>
            <person name="Larionov V."/>
            <person name="Leem S.-H."/>
            <person name="Lopez F."/>
            <person name="Lou Y."/>
            <person name="Lowry S."/>
            <person name="Malfatti S."/>
            <person name="Martinez D."/>
            <person name="McCready P.M."/>
            <person name="Medina C."/>
            <person name="Morgan J."/>
            <person name="Nelson K."/>
            <person name="Nolan M."/>
            <person name="Ovcharenko I."/>
            <person name="Pitluck S."/>
            <person name="Pollard M."/>
            <person name="Popkie A.P."/>
            <person name="Predki P."/>
            <person name="Quan G."/>
            <person name="Ramirez L."/>
            <person name="Rash S."/>
            <person name="Retterer J."/>
            <person name="Rodriguez A."/>
            <person name="Rogers S."/>
            <person name="Salamov A."/>
            <person name="Salazar A."/>
            <person name="She X."/>
            <person name="Smith D."/>
            <person name="Slezak T."/>
            <person name="Solovyev V."/>
            <person name="Thayer N."/>
            <person name="Tice H."/>
            <person name="Tsai M."/>
            <person name="Ustaszewska A."/>
            <person name="Vo N."/>
            <person name="Wagner M."/>
            <person name="Wheeler J."/>
            <person name="Wu K."/>
            <person name="Xie G."/>
            <person name="Yang J."/>
            <person name="Dubchak I."/>
            <person name="Furey T.S."/>
            <person name="DeJong P."/>
            <person name="Dickson M."/>
            <person name="Gordon D."/>
            <person name="Eichler E.E."/>
            <person name="Pennacchio L.A."/>
            <person name="Richardson P."/>
            <person name="Stubbs L."/>
            <person name="Rokhsar D.S."/>
            <person name="Myers R.M."/>
            <person name="Rubin E.M."/>
            <person name="Lucas S.M."/>
        </authorList>
    </citation>
    <scope>NUCLEOTIDE SEQUENCE [LARGE SCALE GENOMIC DNA]</scope>
</reference>
<reference key="6">
    <citation type="journal article" date="2004" name="Genome Res.">
        <title>The status, quality, and expansion of the NIH full-length cDNA project: the Mammalian Gene Collection (MGC).</title>
        <authorList>
            <consortium name="The MGC Project Team"/>
        </authorList>
    </citation>
    <scope>NUCLEOTIDE SEQUENCE [LARGE SCALE MRNA]</scope>
    <scope>VARIANTS ALA-50 AND PRO-149</scope>
    <source>
        <tissue>Uterus</tissue>
    </source>
</reference>
<reference key="7">
    <citation type="journal article" date="1998" name="Cancer Res.">
        <title>The role for NES1 serine protease as a novel tumor suppressor.</title>
        <authorList>
            <person name="Goyal J."/>
            <person name="Smith K.M."/>
            <person name="Cowan J.M."/>
            <person name="Wazer D.E."/>
            <person name="Lee S.W."/>
            <person name="Band V."/>
        </authorList>
    </citation>
    <scope>CHARACTERIZATION</scope>
</reference>
<name>KLK10_HUMAN</name>
<organism>
    <name type="scientific">Homo sapiens</name>
    <name type="common">Human</name>
    <dbReference type="NCBI Taxonomy" id="9606"/>
    <lineage>
        <taxon>Eukaryota</taxon>
        <taxon>Metazoa</taxon>
        <taxon>Chordata</taxon>
        <taxon>Craniata</taxon>
        <taxon>Vertebrata</taxon>
        <taxon>Euteleostomi</taxon>
        <taxon>Mammalia</taxon>
        <taxon>Eutheria</taxon>
        <taxon>Euarchontoglires</taxon>
        <taxon>Primates</taxon>
        <taxon>Haplorrhini</taxon>
        <taxon>Catarrhini</taxon>
        <taxon>Hominidae</taxon>
        <taxon>Homo</taxon>
    </lineage>
</organism>
<gene>
    <name type="primary">KLK10</name>
    <name type="synonym">NES1</name>
    <name type="synonym">PRSSL1</name>
</gene>
<proteinExistence type="evidence at protein level"/>
<sequence length="276" mass="30170">MRAPHLHLSAASGARALAKLLPLLMAQLWAAEAALLPQNDTRLDPEAYGSPCARGSQPWQVSLFNGLSFHCAGVLVDQSWVLTAAHCGNKPLWARVGDDHLLLLQGEQLRRTTRSVVHPKYHQGSGPILPRRTDEHDLMLLKLARPVVLGPRVRALQLPYRCAQPGDQCQVAGWGTTAARRVKYNKGLTCSSITILSPKECEVFYPGVVTNNMICAGLDRGQDPCQSDSGGPLVCDETLQGILSWGVYPCGSAQHPAVYTQICKYMSWINKVIRSN</sequence>
<protein>
    <recommendedName>
        <fullName>Kallikrein-10</fullName>
        <ecNumber>3.4.21.-</ecNumber>
    </recommendedName>
    <alternativeName>
        <fullName>Normal epithelial cell-specific 1</fullName>
    </alternativeName>
    <alternativeName>
        <fullName>Protease serine-like 1</fullName>
    </alternativeName>
</protein>
<feature type="signal peptide" evidence="2">
    <location>
        <begin position="1"/>
        <end position="30"/>
    </location>
</feature>
<feature type="chain" id="PRO_0000027953" description="Kallikrein-10">
    <location>
        <begin position="31"/>
        <end position="276"/>
    </location>
</feature>
<feature type="domain" description="Peptidase S1" evidence="3">
    <location>
        <begin position="47"/>
        <end position="274"/>
    </location>
</feature>
<feature type="active site" description="Charge relay system" evidence="1">
    <location>
        <position position="86"/>
    </location>
</feature>
<feature type="active site" description="Charge relay system" evidence="1">
    <location>
        <position position="137"/>
    </location>
</feature>
<feature type="active site" description="Charge relay system" evidence="1">
    <location>
        <position position="229"/>
    </location>
</feature>
<feature type="glycosylation site" description="N-linked (GlcNAc...) asparagine" evidence="2">
    <location>
        <position position="39"/>
    </location>
</feature>
<feature type="disulfide bond" evidence="3">
    <location>
        <begin position="52"/>
        <end position="162"/>
    </location>
</feature>
<feature type="disulfide bond" evidence="3">
    <location>
        <begin position="71"/>
        <end position="87"/>
    </location>
</feature>
<feature type="disulfide bond" evidence="3">
    <location>
        <begin position="169"/>
        <end position="235"/>
    </location>
</feature>
<feature type="disulfide bond" evidence="3">
    <location>
        <begin position="201"/>
        <end position="215"/>
    </location>
</feature>
<feature type="disulfide bond" evidence="3">
    <location>
        <begin position="225"/>
        <end position="250"/>
    </location>
</feature>
<feature type="disulfide bond" evidence="3">
    <location>
        <begin status="unknown"/>
        <end position="263"/>
    </location>
</feature>
<feature type="sequence variant" id="VAR_027979" description="In dbSNP:rs3745535." evidence="4 5 6">
    <original>S</original>
    <variation>A</variation>
    <location>
        <position position="50"/>
    </location>
</feature>
<feature type="sequence variant" id="VAR_027980" description="In dbSNP:rs2075690." evidence="4 5 6">
    <original>L</original>
    <variation>P</variation>
    <location>
        <position position="149"/>
    </location>
</feature>
<feature type="strand" evidence="8">
    <location>
        <begin position="60"/>
        <end position="65"/>
    </location>
</feature>
<feature type="strand" evidence="8">
    <location>
        <begin position="68"/>
        <end position="77"/>
    </location>
</feature>
<feature type="strand" evidence="8">
    <location>
        <begin position="80"/>
        <end position="83"/>
    </location>
</feature>
<feature type="helix" evidence="8">
    <location>
        <begin position="85"/>
        <end position="87"/>
    </location>
</feature>
<feature type="strand" evidence="8">
    <location>
        <begin position="93"/>
        <end position="96"/>
    </location>
</feature>
<feature type="strand" evidence="8">
    <location>
        <begin position="107"/>
        <end position="117"/>
    </location>
</feature>
<feature type="strand" evidence="8">
    <location>
        <begin position="139"/>
        <end position="145"/>
    </location>
</feature>
<feature type="strand" evidence="8">
    <location>
        <begin position="151"/>
        <end position="153"/>
    </location>
</feature>
<feature type="strand" evidence="8">
    <location>
        <begin position="168"/>
        <end position="173"/>
    </location>
</feature>
<feature type="strand" evidence="8">
    <location>
        <begin position="189"/>
        <end position="195"/>
    </location>
</feature>
<feature type="turn" evidence="8">
    <location>
        <begin position="198"/>
        <end position="200"/>
    </location>
</feature>
<feature type="helix" evidence="8">
    <location>
        <begin position="201"/>
        <end position="204"/>
    </location>
</feature>
<feature type="strand" evidence="8">
    <location>
        <begin position="211"/>
        <end position="218"/>
    </location>
</feature>
<feature type="helix" evidence="8">
    <location>
        <begin position="224"/>
        <end position="226"/>
    </location>
</feature>
<feature type="strand" evidence="8">
    <location>
        <begin position="232"/>
        <end position="235"/>
    </location>
</feature>
<feature type="strand" evidence="8">
    <location>
        <begin position="238"/>
        <end position="245"/>
    </location>
</feature>
<feature type="strand" evidence="9">
    <location>
        <begin position="249"/>
        <end position="251"/>
    </location>
</feature>
<feature type="strand" evidence="8">
    <location>
        <begin position="253"/>
        <end position="255"/>
    </location>
</feature>
<feature type="strand" evidence="8">
    <location>
        <begin position="257"/>
        <end position="261"/>
    </location>
</feature>
<feature type="helix" evidence="8">
    <location>
        <begin position="262"/>
        <end position="264"/>
    </location>
</feature>
<feature type="helix" evidence="8">
    <location>
        <begin position="266"/>
        <end position="272"/>
    </location>
</feature>
<dbReference type="EC" id="3.4.21.-"/>
<dbReference type="EMBL" id="AF024605">
    <property type="protein sequence ID" value="AAB81602.1"/>
    <property type="molecule type" value="mRNA"/>
</dbReference>
<dbReference type="EMBL" id="AF055481">
    <property type="protein sequence ID" value="AAC14266.1"/>
    <property type="molecule type" value="Genomic_DNA"/>
</dbReference>
<dbReference type="EMBL" id="AF243527">
    <property type="protein sequence ID" value="AAG33363.1"/>
    <property type="molecule type" value="Genomic_DNA"/>
</dbReference>
<dbReference type="EMBL" id="AY561635">
    <property type="protein sequence ID" value="AAS66976.1"/>
    <property type="molecule type" value="mRNA"/>
</dbReference>
<dbReference type="EMBL" id="AC011473">
    <property type="protein sequence ID" value="AAG23256.1"/>
    <property type="molecule type" value="Genomic_DNA"/>
</dbReference>
<dbReference type="EMBL" id="BC002710">
    <property type="protein sequence ID" value="AAH02710.1"/>
    <property type="molecule type" value="mRNA"/>
</dbReference>
<dbReference type="CCDS" id="CCDS12817.1"/>
<dbReference type="RefSeq" id="NP_001070968.1">
    <property type="nucleotide sequence ID" value="NM_001077500.2"/>
</dbReference>
<dbReference type="RefSeq" id="NP_002767.2">
    <property type="nucleotide sequence ID" value="NM_002776.4"/>
</dbReference>
<dbReference type="RefSeq" id="NP_665895.1">
    <property type="nucleotide sequence ID" value="NM_145888.3"/>
</dbReference>
<dbReference type="RefSeq" id="XP_005259118.1">
    <property type="nucleotide sequence ID" value="XM_005259061.4"/>
</dbReference>
<dbReference type="RefSeq" id="XP_005259119.1">
    <property type="nucleotide sequence ID" value="XM_005259062.4"/>
</dbReference>
<dbReference type="RefSeq" id="XP_006723350.1">
    <property type="nucleotide sequence ID" value="XM_006723287.5"/>
</dbReference>
<dbReference type="RefSeq" id="XP_006723352.1">
    <property type="nucleotide sequence ID" value="XM_006723289.4"/>
</dbReference>
<dbReference type="RefSeq" id="XP_016882482.1">
    <property type="nucleotide sequence ID" value="XM_017026993.3"/>
</dbReference>
<dbReference type="RefSeq" id="XP_047295058.1">
    <property type="nucleotide sequence ID" value="XM_047439102.1"/>
</dbReference>
<dbReference type="PDB" id="5LPE">
    <property type="method" value="X-ray"/>
    <property type="resolution" value="2.65 A"/>
    <property type="chains" value="A/B=43-276"/>
</dbReference>
<dbReference type="PDB" id="5LPF">
    <property type="method" value="X-ray"/>
    <property type="resolution" value="2.70 A"/>
    <property type="chains" value="A/B=43-276"/>
</dbReference>
<dbReference type="PDBsum" id="5LPE"/>
<dbReference type="PDBsum" id="5LPF"/>
<dbReference type="SMR" id="O43240"/>
<dbReference type="BioGRID" id="111636">
    <property type="interactions" value="211"/>
</dbReference>
<dbReference type="FunCoup" id="O43240">
    <property type="interactions" value="262"/>
</dbReference>
<dbReference type="IntAct" id="O43240">
    <property type="interactions" value="178"/>
</dbReference>
<dbReference type="MINT" id="O43240"/>
<dbReference type="STRING" id="9606.ENSP00000311746"/>
<dbReference type="MEROPS" id="C06.001"/>
<dbReference type="MEROPS" id="S01.246"/>
<dbReference type="GlyCosmos" id="O43240">
    <property type="glycosylation" value="1 site, No reported glycans"/>
</dbReference>
<dbReference type="GlyGen" id="O43240">
    <property type="glycosylation" value="1 site"/>
</dbReference>
<dbReference type="iPTMnet" id="O43240"/>
<dbReference type="PhosphoSitePlus" id="O43240"/>
<dbReference type="SwissPalm" id="O43240"/>
<dbReference type="BioMuta" id="KLK10"/>
<dbReference type="jPOST" id="O43240"/>
<dbReference type="MassIVE" id="O43240"/>
<dbReference type="PaxDb" id="9606-ENSP00000311746"/>
<dbReference type="PeptideAtlas" id="O43240"/>
<dbReference type="PRIDE" id="O43240"/>
<dbReference type="ProteomicsDB" id="48821"/>
<dbReference type="Pumba" id="O43240"/>
<dbReference type="Antibodypedia" id="1705">
    <property type="antibodies" value="361 antibodies from 31 providers"/>
</dbReference>
<dbReference type="DNASU" id="5655"/>
<dbReference type="Ensembl" id="ENST00000309958.7">
    <property type="protein sequence ID" value="ENSP00000311746.2"/>
    <property type="gene ID" value="ENSG00000129451.12"/>
</dbReference>
<dbReference type="Ensembl" id="ENST00000358789.8">
    <property type="protein sequence ID" value="ENSP00000351640.2"/>
    <property type="gene ID" value="ENSG00000129451.12"/>
</dbReference>
<dbReference type="Ensembl" id="ENST00000391805.5">
    <property type="protein sequence ID" value="ENSP00000375681.1"/>
    <property type="gene ID" value="ENSG00000129451.12"/>
</dbReference>
<dbReference type="GeneID" id="5655"/>
<dbReference type="KEGG" id="hsa:5655"/>
<dbReference type="MANE-Select" id="ENST00000358789.8">
    <property type="protein sequence ID" value="ENSP00000351640.2"/>
    <property type="RefSeq nucleotide sequence ID" value="NM_145888.3"/>
    <property type="RefSeq protein sequence ID" value="NP_665895.1"/>
</dbReference>
<dbReference type="UCSC" id="uc002puy.4">
    <property type="organism name" value="human"/>
</dbReference>
<dbReference type="AGR" id="HGNC:6358"/>
<dbReference type="CTD" id="5655"/>
<dbReference type="DisGeNET" id="5655"/>
<dbReference type="GeneCards" id="KLK10"/>
<dbReference type="HGNC" id="HGNC:6358">
    <property type="gene designation" value="KLK10"/>
</dbReference>
<dbReference type="HPA" id="ENSG00000129451">
    <property type="expression patterns" value="Tissue enhanced (cervix, esophagus, vagina)"/>
</dbReference>
<dbReference type="MIM" id="602673">
    <property type="type" value="gene"/>
</dbReference>
<dbReference type="neXtProt" id="NX_O43240"/>
<dbReference type="OpenTargets" id="ENSG00000129451"/>
<dbReference type="PharmGKB" id="PA30147"/>
<dbReference type="VEuPathDB" id="HostDB:ENSG00000129451"/>
<dbReference type="eggNOG" id="KOG3627">
    <property type="taxonomic scope" value="Eukaryota"/>
</dbReference>
<dbReference type="GeneTree" id="ENSGT00930000151066"/>
<dbReference type="HOGENOM" id="CLU_006842_1_1_1"/>
<dbReference type="InParanoid" id="O43240"/>
<dbReference type="OMA" id="NNKPLWA"/>
<dbReference type="OrthoDB" id="10059102at2759"/>
<dbReference type="PAN-GO" id="O43240">
    <property type="GO annotations" value="1 GO annotation based on evolutionary models"/>
</dbReference>
<dbReference type="PhylomeDB" id="O43240"/>
<dbReference type="TreeFam" id="TF331065"/>
<dbReference type="BRENDA" id="3.4.21.B41">
    <property type="organism ID" value="2681"/>
</dbReference>
<dbReference type="PathwayCommons" id="O43240"/>
<dbReference type="SignaLink" id="O43240"/>
<dbReference type="BioGRID-ORCS" id="5655">
    <property type="hits" value="10 hits in 1149 CRISPR screens"/>
</dbReference>
<dbReference type="ChiTaRS" id="KLK10">
    <property type="organism name" value="human"/>
</dbReference>
<dbReference type="GeneWiki" id="KLK10"/>
<dbReference type="GenomeRNAi" id="5655"/>
<dbReference type="Pharos" id="O43240">
    <property type="development level" value="Tbio"/>
</dbReference>
<dbReference type="PRO" id="PR:O43240"/>
<dbReference type="Proteomes" id="UP000005640">
    <property type="component" value="Chromosome 19"/>
</dbReference>
<dbReference type="RNAct" id="O43240">
    <property type="molecule type" value="protein"/>
</dbReference>
<dbReference type="Bgee" id="ENSG00000129451">
    <property type="expression patterns" value="Expressed in lower esophagus mucosa and 115 other cell types or tissues"/>
</dbReference>
<dbReference type="ExpressionAtlas" id="O43240">
    <property type="expression patterns" value="baseline and differential"/>
</dbReference>
<dbReference type="GO" id="GO:0005576">
    <property type="term" value="C:extracellular region"/>
    <property type="evidence" value="ECO:0000304"/>
    <property type="project" value="ProtInc"/>
</dbReference>
<dbReference type="GO" id="GO:0005615">
    <property type="term" value="C:extracellular space"/>
    <property type="evidence" value="ECO:0000318"/>
    <property type="project" value="GO_Central"/>
</dbReference>
<dbReference type="GO" id="GO:0030141">
    <property type="term" value="C:secretory granule"/>
    <property type="evidence" value="ECO:0000318"/>
    <property type="project" value="GO_Central"/>
</dbReference>
<dbReference type="GO" id="GO:0004252">
    <property type="term" value="F:serine-type endopeptidase activity"/>
    <property type="evidence" value="ECO:0000318"/>
    <property type="project" value="GO_Central"/>
</dbReference>
<dbReference type="GO" id="GO:0008236">
    <property type="term" value="F:serine-type peptidase activity"/>
    <property type="evidence" value="ECO:0000304"/>
    <property type="project" value="ProtInc"/>
</dbReference>
<dbReference type="GO" id="GO:0051604">
    <property type="term" value="P:protein maturation"/>
    <property type="evidence" value="ECO:0000318"/>
    <property type="project" value="GO_Central"/>
</dbReference>
<dbReference type="GO" id="GO:0006508">
    <property type="term" value="P:proteolysis"/>
    <property type="evidence" value="ECO:0007669"/>
    <property type="project" value="UniProtKB-KW"/>
</dbReference>
<dbReference type="CDD" id="cd00190">
    <property type="entry name" value="Tryp_SPc"/>
    <property type="match status" value="1"/>
</dbReference>
<dbReference type="FunFam" id="2.40.10.10:FF:000259">
    <property type="match status" value="1"/>
</dbReference>
<dbReference type="FunFam" id="2.40.10.10:FF:000099">
    <property type="entry name" value="Kallikrein related-peptidase 10"/>
    <property type="match status" value="1"/>
</dbReference>
<dbReference type="Gene3D" id="2.40.10.10">
    <property type="entry name" value="Trypsin-like serine proteases"/>
    <property type="match status" value="2"/>
</dbReference>
<dbReference type="InterPro" id="IPR009003">
    <property type="entry name" value="Peptidase_S1_PA"/>
</dbReference>
<dbReference type="InterPro" id="IPR043504">
    <property type="entry name" value="Peptidase_S1_PA_chymotrypsin"/>
</dbReference>
<dbReference type="InterPro" id="IPR001314">
    <property type="entry name" value="Peptidase_S1A"/>
</dbReference>
<dbReference type="InterPro" id="IPR001254">
    <property type="entry name" value="Trypsin_dom"/>
</dbReference>
<dbReference type="InterPro" id="IPR018114">
    <property type="entry name" value="TRYPSIN_HIS"/>
</dbReference>
<dbReference type="PANTHER" id="PTHR24271:SF66">
    <property type="entry name" value="KALLIKREIN-10"/>
    <property type="match status" value="1"/>
</dbReference>
<dbReference type="PANTHER" id="PTHR24271">
    <property type="entry name" value="KALLIKREIN-RELATED"/>
    <property type="match status" value="1"/>
</dbReference>
<dbReference type="Pfam" id="PF00089">
    <property type="entry name" value="Trypsin"/>
    <property type="match status" value="1"/>
</dbReference>
<dbReference type="PRINTS" id="PR00722">
    <property type="entry name" value="CHYMOTRYPSIN"/>
</dbReference>
<dbReference type="SMART" id="SM00020">
    <property type="entry name" value="Tryp_SPc"/>
    <property type="match status" value="1"/>
</dbReference>
<dbReference type="SUPFAM" id="SSF50494">
    <property type="entry name" value="Trypsin-like serine proteases"/>
    <property type="match status" value="1"/>
</dbReference>
<dbReference type="PROSITE" id="PS50240">
    <property type="entry name" value="TRYPSIN_DOM"/>
    <property type="match status" value="1"/>
</dbReference>
<dbReference type="PROSITE" id="PS00134">
    <property type="entry name" value="TRYPSIN_HIS"/>
    <property type="match status" value="1"/>
</dbReference>